<evidence type="ECO:0000255" key="1">
    <source>
        <dbReference type="HAMAP-Rule" id="MF_00211"/>
    </source>
</evidence>
<dbReference type="EC" id="2.4.2.18" evidence="1"/>
<dbReference type="EMBL" id="CP000159">
    <property type="protein sequence ID" value="ABC44355.1"/>
    <property type="molecule type" value="Genomic_DNA"/>
</dbReference>
<dbReference type="RefSeq" id="WP_011404411.1">
    <property type="nucleotide sequence ID" value="NC_007677.1"/>
</dbReference>
<dbReference type="RefSeq" id="YP_445785.1">
    <property type="nucleotide sequence ID" value="NC_007677.1"/>
</dbReference>
<dbReference type="SMR" id="Q2S1Z6"/>
<dbReference type="STRING" id="309807.SRU_1666"/>
<dbReference type="EnsemblBacteria" id="ABC44355">
    <property type="protein sequence ID" value="ABC44355"/>
    <property type="gene ID" value="SRU_1666"/>
</dbReference>
<dbReference type="GeneID" id="83728585"/>
<dbReference type="KEGG" id="sru:SRU_1666"/>
<dbReference type="PATRIC" id="fig|309807.25.peg.1728"/>
<dbReference type="eggNOG" id="COG0547">
    <property type="taxonomic scope" value="Bacteria"/>
</dbReference>
<dbReference type="HOGENOM" id="CLU_034315_2_1_10"/>
<dbReference type="OrthoDB" id="9806430at2"/>
<dbReference type="UniPathway" id="UPA00035">
    <property type="reaction ID" value="UER00041"/>
</dbReference>
<dbReference type="Proteomes" id="UP000008674">
    <property type="component" value="Chromosome"/>
</dbReference>
<dbReference type="GO" id="GO:0005829">
    <property type="term" value="C:cytosol"/>
    <property type="evidence" value="ECO:0007669"/>
    <property type="project" value="TreeGrafter"/>
</dbReference>
<dbReference type="GO" id="GO:0004048">
    <property type="term" value="F:anthranilate phosphoribosyltransferase activity"/>
    <property type="evidence" value="ECO:0007669"/>
    <property type="project" value="UniProtKB-UniRule"/>
</dbReference>
<dbReference type="GO" id="GO:0000287">
    <property type="term" value="F:magnesium ion binding"/>
    <property type="evidence" value="ECO:0007669"/>
    <property type="project" value="UniProtKB-UniRule"/>
</dbReference>
<dbReference type="GO" id="GO:0000162">
    <property type="term" value="P:L-tryptophan biosynthetic process"/>
    <property type="evidence" value="ECO:0007669"/>
    <property type="project" value="UniProtKB-UniRule"/>
</dbReference>
<dbReference type="FunFam" id="3.40.1030.10:FF:000002">
    <property type="entry name" value="Anthranilate phosphoribosyltransferase"/>
    <property type="match status" value="1"/>
</dbReference>
<dbReference type="Gene3D" id="3.40.1030.10">
    <property type="entry name" value="Nucleoside phosphorylase/phosphoribosyltransferase catalytic domain"/>
    <property type="match status" value="1"/>
</dbReference>
<dbReference type="Gene3D" id="1.20.970.10">
    <property type="entry name" value="Transferase, Pyrimidine Nucleoside Phosphorylase, Chain C"/>
    <property type="match status" value="1"/>
</dbReference>
<dbReference type="HAMAP" id="MF_00211">
    <property type="entry name" value="TrpD"/>
    <property type="match status" value="1"/>
</dbReference>
<dbReference type="InterPro" id="IPR005940">
    <property type="entry name" value="Anthranilate_Pribosyl_Tfrase"/>
</dbReference>
<dbReference type="InterPro" id="IPR000312">
    <property type="entry name" value="Glycosyl_Trfase_fam3"/>
</dbReference>
<dbReference type="InterPro" id="IPR017459">
    <property type="entry name" value="Glycosyl_Trfase_fam3_N_dom"/>
</dbReference>
<dbReference type="InterPro" id="IPR036320">
    <property type="entry name" value="Glycosyl_Trfase_fam3_N_dom_sf"/>
</dbReference>
<dbReference type="InterPro" id="IPR035902">
    <property type="entry name" value="Nuc_phospho_transferase"/>
</dbReference>
<dbReference type="NCBIfam" id="TIGR01245">
    <property type="entry name" value="trpD"/>
    <property type="match status" value="1"/>
</dbReference>
<dbReference type="PANTHER" id="PTHR43285">
    <property type="entry name" value="ANTHRANILATE PHOSPHORIBOSYLTRANSFERASE"/>
    <property type="match status" value="1"/>
</dbReference>
<dbReference type="PANTHER" id="PTHR43285:SF2">
    <property type="entry name" value="ANTHRANILATE PHOSPHORIBOSYLTRANSFERASE"/>
    <property type="match status" value="1"/>
</dbReference>
<dbReference type="Pfam" id="PF02885">
    <property type="entry name" value="Glycos_trans_3N"/>
    <property type="match status" value="1"/>
</dbReference>
<dbReference type="Pfam" id="PF00591">
    <property type="entry name" value="Glycos_transf_3"/>
    <property type="match status" value="1"/>
</dbReference>
<dbReference type="SUPFAM" id="SSF52418">
    <property type="entry name" value="Nucleoside phosphorylase/phosphoribosyltransferase catalytic domain"/>
    <property type="match status" value="1"/>
</dbReference>
<dbReference type="SUPFAM" id="SSF47648">
    <property type="entry name" value="Nucleoside phosphorylase/phosphoribosyltransferase N-terminal domain"/>
    <property type="match status" value="1"/>
</dbReference>
<comment type="function">
    <text evidence="1">Catalyzes the transfer of the phosphoribosyl group of 5-phosphorylribose-1-pyrophosphate (PRPP) to anthranilate to yield N-(5'-phosphoribosyl)-anthranilate (PRA).</text>
</comment>
<comment type="catalytic activity">
    <reaction evidence="1">
        <text>N-(5-phospho-beta-D-ribosyl)anthranilate + diphosphate = 5-phospho-alpha-D-ribose 1-diphosphate + anthranilate</text>
        <dbReference type="Rhea" id="RHEA:11768"/>
        <dbReference type="ChEBI" id="CHEBI:16567"/>
        <dbReference type="ChEBI" id="CHEBI:18277"/>
        <dbReference type="ChEBI" id="CHEBI:33019"/>
        <dbReference type="ChEBI" id="CHEBI:58017"/>
        <dbReference type="EC" id="2.4.2.18"/>
    </reaction>
</comment>
<comment type="cofactor">
    <cofactor evidence="1">
        <name>Mg(2+)</name>
        <dbReference type="ChEBI" id="CHEBI:18420"/>
    </cofactor>
    <text evidence="1">Binds 2 magnesium ions per monomer.</text>
</comment>
<comment type="pathway">
    <text evidence="1">Amino-acid biosynthesis; L-tryptophan biosynthesis; L-tryptophan from chorismate: step 2/5.</text>
</comment>
<comment type="subunit">
    <text evidence="1">Homodimer.</text>
</comment>
<comment type="similarity">
    <text evidence="1">Belongs to the anthranilate phosphoribosyltransferase family.</text>
</comment>
<sequence>MNTLLQTIADGDPLSRPEAEEAMATMMSGSARDEHIAALLMGLRTRGETLDELVGFTKTMREFAVSVETDDPQTIDLCGTGGDGASTFNISTTASFIAAGAGATVAKHGNRSVSSQSGSADVLEALGVQIDLEKEGVEHCLHEAGIAFLFAPFFHPAMRHVMPVRKALGVRTFFNILGPLCNPAGVTRQIVGAFDTSTAQTMVRILAELDADHVITLHADDGLDEVSISASTTLFEYDASDQNPVPRSHEVGPERHDLDRASISTLEGGTAQQNASILRNILSGEDQGPRRDVALLNAAYALHVSDQYADLDACLEAAAESIDSGAALDALNTLASVSKEAKSE</sequence>
<protein>
    <recommendedName>
        <fullName evidence="1">Anthranilate phosphoribosyltransferase</fullName>
        <ecNumber evidence="1">2.4.2.18</ecNumber>
    </recommendedName>
</protein>
<organism>
    <name type="scientific">Salinibacter ruber (strain DSM 13855 / M31)</name>
    <dbReference type="NCBI Taxonomy" id="309807"/>
    <lineage>
        <taxon>Bacteria</taxon>
        <taxon>Pseudomonadati</taxon>
        <taxon>Rhodothermota</taxon>
        <taxon>Rhodothermia</taxon>
        <taxon>Rhodothermales</taxon>
        <taxon>Salinibacteraceae</taxon>
        <taxon>Salinibacter</taxon>
    </lineage>
</organism>
<proteinExistence type="inferred from homology"/>
<name>TRPD_SALRD</name>
<keyword id="KW-0028">Amino-acid biosynthesis</keyword>
<keyword id="KW-0057">Aromatic amino acid biosynthesis</keyword>
<keyword id="KW-0328">Glycosyltransferase</keyword>
<keyword id="KW-0460">Magnesium</keyword>
<keyword id="KW-0479">Metal-binding</keyword>
<keyword id="KW-1185">Reference proteome</keyword>
<keyword id="KW-0808">Transferase</keyword>
<keyword id="KW-0822">Tryptophan biosynthesis</keyword>
<reference key="1">
    <citation type="journal article" date="2005" name="Proc. Natl. Acad. Sci. U.S.A.">
        <title>The genome of Salinibacter ruber: convergence and gene exchange among hyperhalophilic bacteria and archaea.</title>
        <authorList>
            <person name="Mongodin E.F."/>
            <person name="Nelson K.E."/>
            <person name="Daugherty S."/>
            <person name="DeBoy R.T."/>
            <person name="Wister J."/>
            <person name="Khouri H."/>
            <person name="Weidman J."/>
            <person name="Walsh D.A."/>
            <person name="Papke R.T."/>
            <person name="Sanchez Perez G."/>
            <person name="Sharma A.K."/>
            <person name="Nesbo C.L."/>
            <person name="MacLeod D."/>
            <person name="Bapteste E."/>
            <person name="Doolittle W.F."/>
            <person name="Charlebois R.L."/>
            <person name="Legault B."/>
            <person name="Rodriguez-Valera F."/>
        </authorList>
    </citation>
    <scope>NUCLEOTIDE SEQUENCE [LARGE SCALE GENOMIC DNA]</scope>
    <source>
        <strain>DSM 13855 / CECT 5946 / M31</strain>
    </source>
</reference>
<accession>Q2S1Z6</accession>
<gene>
    <name evidence="1" type="primary">trpD</name>
    <name type="ordered locus">SRU_1666</name>
</gene>
<feature type="chain" id="PRO_0000325461" description="Anthranilate phosphoribosyltransferase">
    <location>
        <begin position="1"/>
        <end position="344"/>
    </location>
</feature>
<feature type="binding site" evidence="1">
    <location>
        <position position="79"/>
    </location>
    <ligand>
        <name>5-phospho-alpha-D-ribose 1-diphosphate</name>
        <dbReference type="ChEBI" id="CHEBI:58017"/>
    </ligand>
</feature>
<feature type="binding site" evidence="1">
    <location>
        <position position="79"/>
    </location>
    <ligand>
        <name>anthranilate</name>
        <dbReference type="ChEBI" id="CHEBI:16567"/>
        <label>1</label>
    </ligand>
</feature>
<feature type="binding site" evidence="1">
    <location>
        <begin position="82"/>
        <end position="83"/>
    </location>
    <ligand>
        <name>5-phospho-alpha-D-ribose 1-diphosphate</name>
        <dbReference type="ChEBI" id="CHEBI:58017"/>
    </ligand>
</feature>
<feature type="binding site" evidence="1">
    <location>
        <position position="87"/>
    </location>
    <ligand>
        <name>5-phospho-alpha-D-ribose 1-diphosphate</name>
        <dbReference type="ChEBI" id="CHEBI:58017"/>
    </ligand>
</feature>
<feature type="binding site" evidence="1">
    <location>
        <begin position="89"/>
        <end position="92"/>
    </location>
    <ligand>
        <name>5-phospho-alpha-D-ribose 1-diphosphate</name>
        <dbReference type="ChEBI" id="CHEBI:58017"/>
    </ligand>
</feature>
<feature type="binding site" evidence="1">
    <location>
        <position position="91"/>
    </location>
    <ligand>
        <name>Mg(2+)</name>
        <dbReference type="ChEBI" id="CHEBI:18420"/>
        <label>1</label>
    </ligand>
</feature>
<feature type="binding site" evidence="1">
    <location>
        <begin position="107"/>
        <end position="115"/>
    </location>
    <ligand>
        <name>5-phospho-alpha-D-ribose 1-diphosphate</name>
        <dbReference type="ChEBI" id="CHEBI:58017"/>
    </ligand>
</feature>
<feature type="binding site" evidence="1">
    <location>
        <position position="110"/>
    </location>
    <ligand>
        <name>anthranilate</name>
        <dbReference type="ChEBI" id="CHEBI:16567"/>
        <label>1</label>
    </ligand>
</feature>
<feature type="binding site" evidence="1">
    <location>
        <position position="119"/>
    </location>
    <ligand>
        <name>5-phospho-alpha-D-ribose 1-diphosphate</name>
        <dbReference type="ChEBI" id="CHEBI:58017"/>
    </ligand>
</feature>
<feature type="binding site" evidence="1">
    <location>
        <position position="165"/>
    </location>
    <ligand>
        <name>anthranilate</name>
        <dbReference type="ChEBI" id="CHEBI:16567"/>
        <label>2</label>
    </ligand>
</feature>
<feature type="binding site" evidence="1">
    <location>
        <position position="224"/>
    </location>
    <ligand>
        <name>Mg(2+)</name>
        <dbReference type="ChEBI" id="CHEBI:18420"/>
        <label>2</label>
    </ligand>
</feature>
<feature type="binding site" evidence="1">
    <location>
        <position position="225"/>
    </location>
    <ligand>
        <name>Mg(2+)</name>
        <dbReference type="ChEBI" id="CHEBI:18420"/>
        <label>1</label>
    </ligand>
</feature>
<feature type="binding site" evidence="1">
    <location>
        <position position="225"/>
    </location>
    <ligand>
        <name>Mg(2+)</name>
        <dbReference type="ChEBI" id="CHEBI:18420"/>
        <label>2</label>
    </ligand>
</feature>